<comment type="function">
    <text evidence="3 5 7 8 9 10 12 13 14 15 16 18 19">Component of the DASH complex that connects microtubules with kinetochores and couples microtubule depolymerisation to chromosome movement; it is involved in retrieving kinetochores to the spindle poles before their re-orientation on the spindle in early mitosis and allows microtubule depolymerization to pull chromosomes apart and resist detachment during anaphase (PubMed:15664196, PubMed:16415853, PubMed:16777964, PubMed:17460120, PubMed:17643123). Kinetochores, consisting of a centromere-associated inner segment and a microtubule-contacting outer segment, play a crucial role in chromosome segregation by mediating the physical connection between centromeric DNA and microtubules (PubMed:11782438). Kinetochores also serve as an input point for the spindle assembly checkpoint, which delays anaphase until all chromosomes have bioriented on the mitotic spindle (PubMed:11782438, PubMed:12408861). During spindle-kinetochore attachment, kinetochores first attach to the lateral surface of spindle microtubules, which supports the congression of chromosomes toward the middle of the dividing cell; they then slide along towards the spindle pole, a process independent of the DASH complex but requiring the NDC80 complex (PubMed:15846338, PubMed:17620411). When the end of a disassembling microtubule reaches the laterally attached kinetochore, the DASH complex together with the NDC80 complex and STU2 convert lateral attachment to end-on capture to produce a structure that can track with microtubule shortening and sustain attachment when tension is applied across sister kinetochores upon their biorientation (PubMed:11782438, PubMed:15640796, PubMed:15664196, PubMed:15846338, PubMed:17620411, PubMed:25236177). Microtubule depolymerization proceeds by protofilament splaying and induces the kinetochore-attached DASH complex to slide longitudinally, thereby helping to transduce depolymerization energy into pulling forces to disjoin chromatids (PubMed:16415853, PubMed:16777964). Incorrect microtubule attachments are corrected by releasing microubules from the kinetochore through phosphorylation by IPL1 of kinetochore components (PubMed:12408861). Links the microtubule cytoskeleton to chromosomes during interphase (PubMed:36701236). Also contributes to the poleward transport of kinetochores on microtubules following centromeric DNA replication in S-phase (PubMed:18079178).</text>
</comment>
<comment type="subunit">
    <text evidence="1 3 4 7 11 13 15 17 18">Component of the DASH complex consisting of ASK1, DAD1, DAD2, DAD3, DAD4, DAM1, DUO1, HSK3, SPC19 and SPC34, with a stoichiometry of one copy of each subunit per complex (PubMed:11782438, PubMed:11799062, PubMed:15640796, PubMed:16715078, PubMed:17460120, PubMed:17643123, PubMed:24930965, PubMed:25236177). Multiple DASH complexes oligomerize to form a ring that encircles spindle microtubules and organizes the rod-like NDC80 complexes of the outer kinetochore (PubMed:16715078, PubMed:17460120, PubMed:17643123, PubMed:25236177). DASH complex oligomerization strengthens microtubule attachments (PubMed:25236177). On cytoplasmic microtubules, DASH complexes appear to form patches instead of rings (By similarity).</text>
</comment>
<comment type="interaction">
    <interactant intactId="EBI-26401">
        <id>P36131</id>
    </interactant>
    <interactant intactId="EBI-23268">
        <id>P53267</id>
        <label>DAM1</label>
    </interactant>
    <organismsDiffer>false</organismsDiffer>
    <experiments>5</experiments>
</comment>
<comment type="interaction">
    <interactant intactId="EBI-26401">
        <id>P36131</id>
    </interactant>
    <interactant intactId="EBI-23800">
        <id>P53168</id>
        <label>DUO1</label>
    </interactant>
    <organismsDiffer>false</organismsDiffer>
    <experiments>3</experiments>
</comment>
<comment type="interaction">
    <interactant intactId="EBI-26401">
        <id>P36131</id>
    </interactant>
    <interactant intactId="EBI-38809">
        <id>Q03954</id>
        <label>SPC19</label>
    </interactant>
    <organismsDiffer>false</organismsDiffer>
    <experiments>5</experiments>
</comment>
<comment type="subcellular location">
    <subcellularLocation>
        <location evidence="6">Nucleus</location>
    </subcellularLocation>
    <subcellularLocation>
        <location evidence="3 6">Cytoplasm</location>
        <location evidence="3 6">Cytoskeleton</location>
        <location evidence="3 6">Spindle</location>
    </subcellularLocation>
    <subcellularLocation>
        <location evidence="3 6">Chromosome</location>
        <location evidence="3 6">Centromere</location>
        <location evidence="3 6">Kinetochore</location>
    </subcellularLocation>
    <subcellularLocation>
        <location evidence="19">Chromosome</location>
    </subcellularLocation>
    <text evidence="6 19">Associates with the mitotic spindle and the kinetochore (PubMed:14562095). Associates with origin of replication (ORI) sites during interphase (PubMed:36701236).</text>
</comment>
<comment type="similarity">
    <text evidence="20">Belongs to the DASH complex SPC34 family.</text>
</comment>
<name>SPC34_YEAST</name>
<protein>
    <recommendedName>
        <fullName>DASH complex subunit SPC34</fullName>
    </recommendedName>
    <alternativeName>
        <fullName>34 kDa spindle pole component protein</fullName>
    </alternativeName>
    <alternativeName>
        <fullName>Outer kinetochore protein SPC34</fullName>
    </alternativeName>
</protein>
<dbReference type="EMBL" id="Z28262">
    <property type="protein sequence ID" value="CAA82111.1"/>
    <property type="molecule type" value="Genomic_DNA"/>
</dbReference>
<dbReference type="EMBL" id="BK006944">
    <property type="protein sequence ID" value="DAA09190.1"/>
    <property type="molecule type" value="Genomic_DNA"/>
</dbReference>
<dbReference type="PIR" id="S38109">
    <property type="entry name" value="S38109"/>
</dbReference>
<dbReference type="RefSeq" id="NP_012963.3">
    <property type="nucleotide sequence ID" value="NM_001179827.3"/>
</dbReference>
<dbReference type="PDB" id="8Q84">
    <property type="method" value="EM"/>
    <property type="resolution" value="3.15 A"/>
    <property type="chains" value="O/a=1-295"/>
</dbReference>
<dbReference type="PDB" id="8Q85">
    <property type="method" value="EM"/>
    <property type="resolution" value="3.97 A"/>
    <property type="chains" value="a=1-295"/>
</dbReference>
<dbReference type="PDBsum" id="8Q84"/>
<dbReference type="PDBsum" id="8Q85"/>
<dbReference type="EMDB" id="EMD-18246"/>
<dbReference type="EMDB" id="EMD-18247"/>
<dbReference type="SMR" id="P36131"/>
<dbReference type="BioGRID" id="34168">
    <property type="interactions" value="60"/>
</dbReference>
<dbReference type="ComplexPortal" id="CPX-1041">
    <property type="entry name" value="DASH complex"/>
</dbReference>
<dbReference type="DIP" id="DIP-1649N"/>
<dbReference type="FunCoup" id="P36131">
    <property type="interactions" value="57"/>
</dbReference>
<dbReference type="IntAct" id="P36131">
    <property type="interactions" value="12"/>
</dbReference>
<dbReference type="MINT" id="P36131"/>
<dbReference type="STRING" id="4932.YKR037C"/>
<dbReference type="iPTMnet" id="P36131"/>
<dbReference type="PaxDb" id="4932-YKR037C"/>
<dbReference type="PeptideAtlas" id="P36131"/>
<dbReference type="EnsemblFungi" id="YKR037C_mRNA">
    <property type="protein sequence ID" value="YKR037C"/>
    <property type="gene ID" value="YKR037C"/>
</dbReference>
<dbReference type="GeneID" id="853909"/>
<dbReference type="KEGG" id="sce:YKR037C"/>
<dbReference type="AGR" id="SGD:S000001745"/>
<dbReference type="SGD" id="S000001745">
    <property type="gene designation" value="SPC34"/>
</dbReference>
<dbReference type="VEuPathDB" id="FungiDB:YKR037C"/>
<dbReference type="eggNOG" id="ENOG502QSS0">
    <property type="taxonomic scope" value="Eukaryota"/>
</dbReference>
<dbReference type="HOGENOM" id="CLU_970457_0_0_1"/>
<dbReference type="InParanoid" id="P36131"/>
<dbReference type="OMA" id="LIRDCNP"/>
<dbReference type="OrthoDB" id="10016597at2759"/>
<dbReference type="BioCyc" id="YEAST:G3O-32009-MONOMER"/>
<dbReference type="BioGRID-ORCS" id="853909">
    <property type="hits" value="4 hits in 10 CRISPR screens"/>
</dbReference>
<dbReference type="CD-CODE" id="876000F7">
    <property type="entry name" value="Centrosome"/>
</dbReference>
<dbReference type="PRO" id="PR:P36131"/>
<dbReference type="Proteomes" id="UP000002311">
    <property type="component" value="Chromosome XI"/>
</dbReference>
<dbReference type="RNAct" id="P36131">
    <property type="molecule type" value="protein"/>
</dbReference>
<dbReference type="GO" id="GO:0005737">
    <property type="term" value="C:cytoplasm"/>
    <property type="evidence" value="ECO:0007669"/>
    <property type="project" value="UniProtKB-KW"/>
</dbReference>
<dbReference type="GO" id="GO:0042729">
    <property type="term" value="C:DASH complex"/>
    <property type="evidence" value="ECO:0000314"/>
    <property type="project" value="SGD"/>
</dbReference>
<dbReference type="GO" id="GO:0072686">
    <property type="term" value="C:mitotic spindle"/>
    <property type="evidence" value="ECO:0000303"/>
    <property type="project" value="ComplexPortal"/>
</dbReference>
<dbReference type="GO" id="GO:0005876">
    <property type="term" value="C:spindle microtubule"/>
    <property type="evidence" value="ECO:0007669"/>
    <property type="project" value="InterPro"/>
</dbReference>
<dbReference type="GO" id="GO:0008608">
    <property type="term" value="P:attachment of spindle microtubules to kinetochore"/>
    <property type="evidence" value="ECO:0000314"/>
    <property type="project" value="SGD"/>
</dbReference>
<dbReference type="GO" id="GO:0051301">
    <property type="term" value="P:cell division"/>
    <property type="evidence" value="ECO:0007669"/>
    <property type="project" value="UniProtKB-KW"/>
</dbReference>
<dbReference type="GO" id="GO:1990758">
    <property type="term" value="P:mitotic sister chromatid biorientation"/>
    <property type="evidence" value="ECO:0000314"/>
    <property type="project" value="ComplexPortal"/>
</dbReference>
<dbReference type="GO" id="GO:0051987">
    <property type="term" value="P:positive regulation of attachment of spindle microtubules to kinetochore"/>
    <property type="evidence" value="ECO:0000314"/>
    <property type="project" value="ComplexPortal"/>
</dbReference>
<dbReference type="GO" id="GO:0031116">
    <property type="term" value="P:positive regulation of microtubule polymerization"/>
    <property type="evidence" value="ECO:0000314"/>
    <property type="project" value="SGD"/>
</dbReference>
<dbReference type="GO" id="GO:1990976">
    <property type="term" value="P:protein transport along microtubule to mitotic spindle pole body"/>
    <property type="evidence" value="ECO:0000315"/>
    <property type="project" value="UniProtKB"/>
</dbReference>
<dbReference type="InterPro" id="IPR013966">
    <property type="entry name" value="Spc34"/>
</dbReference>
<dbReference type="Pfam" id="PF08657">
    <property type="entry name" value="DASH_Spc34"/>
    <property type="match status" value="1"/>
</dbReference>
<accession>P36131</accession>
<accession>D6VXA0</accession>
<keyword id="KW-0002">3D-structure</keyword>
<keyword id="KW-0131">Cell cycle</keyword>
<keyword id="KW-0132">Cell division</keyword>
<keyword id="KW-0137">Centromere</keyword>
<keyword id="KW-0158">Chromosome</keyword>
<keyword id="KW-0159">Chromosome partition</keyword>
<keyword id="KW-0175">Coiled coil</keyword>
<keyword id="KW-0963">Cytoplasm</keyword>
<keyword id="KW-0206">Cytoskeleton</keyword>
<keyword id="KW-0903">Direct protein sequencing</keyword>
<keyword id="KW-0995">Kinetochore</keyword>
<keyword id="KW-0493">Microtubule</keyword>
<keyword id="KW-0498">Mitosis</keyword>
<keyword id="KW-0539">Nucleus</keyword>
<keyword id="KW-0597">Phosphoprotein</keyword>
<keyword id="KW-1185">Reference proteome</keyword>
<gene>
    <name type="primary">SPC34</name>
    <name type="ordered locus">YKR037C</name>
</gene>
<evidence type="ECO:0000250" key="1">
    <source>
        <dbReference type="UniProtKB" id="O14285"/>
    </source>
</evidence>
<evidence type="ECO:0000255" key="2"/>
<evidence type="ECO:0000269" key="3">
    <source>
    </source>
</evidence>
<evidence type="ECO:0000269" key="4">
    <source>
    </source>
</evidence>
<evidence type="ECO:0000269" key="5">
    <source>
    </source>
</evidence>
<evidence type="ECO:0000269" key="6">
    <source>
    </source>
</evidence>
<evidence type="ECO:0000269" key="7">
    <source>
    </source>
</evidence>
<evidence type="ECO:0000269" key="8">
    <source>
    </source>
</evidence>
<evidence type="ECO:0000269" key="9">
    <source>
    </source>
</evidence>
<evidence type="ECO:0000269" key="10">
    <source>
    </source>
</evidence>
<evidence type="ECO:0000269" key="11">
    <source>
    </source>
</evidence>
<evidence type="ECO:0000269" key="12">
    <source>
    </source>
</evidence>
<evidence type="ECO:0000269" key="13">
    <source>
    </source>
</evidence>
<evidence type="ECO:0000269" key="14">
    <source>
    </source>
</evidence>
<evidence type="ECO:0000269" key="15">
    <source>
    </source>
</evidence>
<evidence type="ECO:0000269" key="16">
    <source>
    </source>
</evidence>
<evidence type="ECO:0000269" key="17">
    <source>
    </source>
</evidence>
<evidence type="ECO:0000269" key="18">
    <source>
    </source>
</evidence>
<evidence type="ECO:0000269" key="19">
    <source>
    </source>
</evidence>
<evidence type="ECO:0000305" key="20"/>
<evidence type="ECO:0007744" key="21">
    <source>
    </source>
</evidence>
<organism>
    <name type="scientific">Saccharomyces cerevisiae (strain ATCC 204508 / S288c)</name>
    <name type="common">Baker's yeast</name>
    <dbReference type="NCBI Taxonomy" id="559292"/>
    <lineage>
        <taxon>Eukaryota</taxon>
        <taxon>Fungi</taxon>
        <taxon>Dikarya</taxon>
        <taxon>Ascomycota</taxon>
        <taxon>Saccharomycotina</taxon>
        <taxon>Saccharomycetes</taxon>
        <taxon>Saccharomycetales</taxon>
        <taxon>Saccharomycetaceae</taxon>
        <taxon>Saccharomyces</taxon>
    </lineage>
</organism>
<proteinExistence type="evidence at protein level"/>
<feature type="chain" id="PRO_0000211554" description="DASH complex subunit SPC34">
    <location>
        <begin position="1"/>
        <end position="295"/>
    </location>
</feature>
<feature type="coiled-coil region" evidence="2">
    <location>
        <begin position="223"/>
        <end position="295"/>
    </location>
</feature>
<feature type="modified residue" description="Phosphothreonine; by IPL1" evidence="5 21">
    <location>
        <position position="199"/>
    </location>
</feature>
<sequence>MGESLDRCIDDINRAVDSMSTLYFKPPGIFHNAILQGASNKASIRKDITRLIKDCNHDEAYLLFKVNPEKQSVSRRDGKEGVFDYVIKRDTDMKRNRRLGRPGEKPIIHVPKEVYLNKDRLDLNNKRRRTATTSGGGLNGFIFDTDLIGSSVISNSSSGTFKALSAVFKDDPQIQRLLYALENGSVLMEEESNNQRRKTIFVEDFPTDLILKVMAEVTDLWPLTEFKQDYDQLYHNYEQLSSKLRFIKKEVLLQDDRLKTMSQYHPSSSHDVAKIIRKEKDEIRRLEMEIANLQE</sequence>
<reference key="1">
    <citation type="journal article" date="1994" name="Nature">
        <title>Complete DNA sequence of yeast chromosome XI.</title>
        <authorList>
            <person name="Dujon B."/>
            <person name="Alexandraki D."/>
            <person name="Andre B."/>
            <person name="Ansorge W."/>
            <person name="Baladron V."/>
            <person name="Ballesta J.P.G."/>
            <person name="Banrevi A."/>
            <person name="Bolle P.-A."/>
            <person name="Bolotin-Fukuhara M."/>
            <person name="Bossier P."/>
            <person name="Bou G."/>
            <person name="Boyer J."/>
            <person name="Buitrago M.J."/>
            <person name="Cheret G."/>
            <person name="Colleaux L."/>
            <person name="Daignan-Fornier B."/>
            <person name="del Rey F."/>
            <person name="Dion C."/>
            <person name="Domdey H."/>
            <person name="Duesterhoeft A."/>
            <person name="Duesterhus S."/>
            <person name="Entian K.-D."/>
            <person name="Erfle H."/>
            <person name="Esteban P.F."/>
            <person name="Feldmann H."/>
            <person name="Fernandes L."/>
            <person name="Fobo G.M."/>
            <person name="Fritz C."/>
            <person name="Fukuhara H."/>
            <person name="Gabel C."/>
            <person name="Gaillon L."/>
            <person name="Garcia-Cantalejo J.M."/>
            <person name="Garcia-Ramirez J.J."/>
            <person name="Gent M.E."/>
            <person name="Ghazvini M."/>
            <person name="Goffeau A."/>
            <person name="Gonzalez A."/>
            <person name="Grothues D."/>
            <person name="Guerreiro P."/>
            <person name="Hegemann J.H."/>
            <person name="Hewitt N."/>
            <person name="Hilger F."/>
            <person name="Hollenberg C.P."/>
            <person name="Horaitis O."/>
            <person name="Indge K.J."/>
            <person name="Jacquier A."/>
            <person name="James C.M."/>
            <person name="Jauniaux J.-C."/>
            <person name="Jimenez A."/>
            <person name="Keuchel H."/>
            <person name="Kirchrath L."/>
            <person name="Kleine K."/>
            <person name="Koetter P."/>
            <person name="Legrain P."/>
            <person name="Liebl S."/>
            <person name="Louis E.J."/>
            <person name="Maia e Silva A."/>
            <person name="Marck C."/>
            <person name="Monnier A.-L."/>
            <person name="Moestl D."/>
            <person name="Mueller S."/>
            <person name="Obermaier B."/>
            <person name="Oliver S.G."/>
            <person name="Pallier C."/>
            <person name="Pascolo S."/>
            <person name="Pfeiffer F."/>
            <person name="Philippsen P."/>
            <person name="Planta R.J."/>
            <person name="Pohl F.M."/>
            <person name="Pohl T.M."/>
            <person name="Poehlmann R."/>
            <person name="Portetelle D."/>
            <person name="Purnelle B."/>
            <person name="Puzos V."/>
            <person name="Ramezani Rad M."/>
            <person name="Rasmussen S.W."/>
            <person name="Remacha M.A."/>
            <person name="Revuelta J.L."/>
            <person name="Richard G.-F."/>
            <person name="Rieger M."/>
            <person name="Rodrigues-Pousada C."/>
            <person name="Rose M."/>
            <person name="Rupp T."/>
            <person name="Santos M.A."/>
            <person name="Schwager C."/>
            <person name="Sensen C."/>
            <person name="Skala J."/>
            <person name="Soares H."/>
            <person name="Sor F."/>
            <person name="Stegemann J."/>
            <person name="Tettelin H."/>
            <person name="Thierry A."/>
            <person name="Tzermia M."/>
            <person name="Urrestarazu L.A."/>
            <person name="van Dyck L."/>
            <person name="van Vliet-Reedijk J.C."/>
            <person name="Valens M."/>
            <person name="Vandenbol M."/>
            <person name="Vilela C."/>
            <person name="Vissers S."/>
            <person name="von Wettstein D."/>
            <person name="Voss H."/>
            <person name="Wiemann S."/>
            <person name="Xu G."/>
            <person name="Zimmermann J."/>
            <person name="Haasemann M."/>
            <person name="Becker I."/>
            <person name="Mewes H.-W."/>
        </authorList>
    </citation>
    <scope>NUCLEOTIDE SEQUENCE [LARGE SCALE GENOMIC DNA]</scope>
    <source>
        <strain>ATCC 204508 / S288c</strain>
    </source>
</reference>
<reference key="2">
    <citation type="journal article" date="2014" name="G3 (Bethesda)">
        <title>The reference genome sequence of Saccharomyces cerevisiae: Then and now.</title>
        <authorList>
            <person name="Engel S.R."/>
            <person name="Dietrich F.S."/>
            <person name="Fisk D.G."/>
            <person name="Binkley G."/>
            <person name="Balakrishnan R."/>
            <person name="Costanzo M.C."/>
            <person name="Dwight S.S."/>
            <person name="Hitz B.C."/>
            <person name="Karra K."/>
            <person name="Nash R.S."/>
            <person name="Weng S."/>
            <person name="Wong E.D."/>
            <person name="Lloyd P."/>
            <person name="Skrzypek M.S."/>
            <person name="Miyasato S.R."/>
            <person name="Simison M."/>
            <person name="Cherry J.M."/>
        </authorList>
    </citation>
    <scope>GENOME REANNOTATION</scope>
    <source>
        <strain>ATCC 204508 / S288c</strain>
    </source>
</reference>
<reference key="3">
    <citation type="journal article" date="2007" name="Mol. Biol. Cell">
        <title>Protein arms in the kinetochore-microtubule interface of the yeast DASH complex.</title>
        <authorList>
            <person name="Miranda J.J."/>
            <person name="King D.S."/>
            <person name="Harrison S.C."/>
        </authorList>
    </citation>
    <scope>PROTEIN SEQUENCE OF 93-98</scope>
    <scope>FUNCTION</scope>
    <scope>IDENTIFICATION IN THE DASH COMPLEX</scope>
</reference>
<reference key="4">
    <citation type="journal article" date="2002" name="Cell">
        <title>Phospho-regulation of kinetochore-microtubule attachments by the Aurora kinase Ipl1p.</title>
        <authorList>
            <person name="Cheeseman I.M."/>
            <person name="Anderson S."/>
            <person name="Jwa M."/>
            <person name="Green E.M."/>
            <person name="Kang J.-S."/>
            <person name="Yates J.R. III"/>
            <person name="Chan C.S.M."/>
            <person name="Drubin D.G."/>
            <person name="Barnes G."/>
        </authorList>
    </citation>
    <scope>FUNCTION</scope>
    <scope>PHOSPHORYLATION AT THR-199</scope>
</reference>
<reference key="5">
    <citation type="journal article" date="2002" name="EMBO J.">
        <title>Four new subunits of the Dam1-Duo1 complex reveal novel functions in sister kinetochore biorientation.</title>
        <authorList>
            <person name="Janke C."/>
            <person name="Ortiz J."/>
            <person name="Tanaka T.U."/>
            <person name="Lechner J."/>
            <person name="Schiebel E."/>
        </authorList>
    </citation>
    <scope>FUNCTION</scope>
    <scope>IDENTIFICATION IN THE DASH COMPLEX</scope>
    <scope>IDENTIFICATION BY MASS SPECTROMETRY</scope>
    <scope>SUBCELLULAR LOCATION</scope>
</reference>
<reference key="6">
    <citation type="journal article" date="2002" name="Genes Dev.">
        <title>The mitotic spindle is required for loading of the DASH complex onto the kinetochore.</title>
        <authorList>
            <person name="Li Y."/>
            <person name="Bachant J.B."/>
            <person name="Alcasabas A.A."/>
            <person name="Wang Y."/>
            <person name="Qin J."/>
            <person name="Elledge S.J."/>
        </authorList>
    </citation>
    <scope>IDENTIFICATION IN THE DASH COMPLEX</scope>
</reference>
<reference key="7">
    <citation type="journal article" date="2003" name="Nature">
        <title>Global analysis of protein localization in budding yeast.</title>
        <authorList>
            <person name="Huh W.-K."/>
            <person name="Falvo J.V."/>
            <person name="Gerke L.C."/>
            <person name="Carroll A.S."/>
            <person name="Howson R.W."/>
            <person name="Weissman J.S."/>
            <person name="O'Shea E.K."/>
        </authorList>
    </citation>
    <scope>SUBCELLULAR LOCATION [LARGE SCALE ANALYSIS]</scope>
</reference>
<reference key="8">
    <citation type="journal article" date="2005" name="Mol. Cell">
        <title>Formation of a dynamic kinetochore-microtubule interface through assembly of the Dam1 ring complex.</title>
        <authorList>
            <person name="Westermann S."/>
            <person name="Avila-Sakar A."/>
            <person name="Wang H.-W."/>
            <person name="Niederstrasser H."/>
            <person name="Wong J."/>
            <person name="Drubin D.G."/>
            <person name="Nogales E."/>
            <person name="Barnes G."/>
        </authorList>
    </citation>
    <scope>FUNCTION</scope>
</reference>
<reference key="9">
    <citation type="journal article" date="2005" name="Nature">
        <title>Molecular mechanisms of kinetochore capture by spindle microtubules.</title>
        <authorList>
            <person name="Tanaka K."/>
            <person name="Mukae N."/>
            <person name="Dewar H."/>
            <person name="van Breugel M."/>
            <person name="James E.K."/>
            <person name="Prescott A.R."/>
            <person name="Antony C."/>
            <person name="Tanaka T.U."/>
        </authorList>
    </citation>
    <scope>FUNCTION</scope>
</reference>
<reference key="10">
    <citation type="journal article" date="2006" name="Nature">
        <title>The Dam1 kinetochore ring complex moves processively on depolymerizing microtubule ends.</title>
        <authorList>
            <person name="Westermann S."/>
            <person name="Wang H.-W."/>
            <person name="Avila-Sakar A."/>
            <person name="Drubin D.G."/>
            <person name="Nogales E."/>
            <person name="Barnes G."/>
        </authorList>
    </citation>
    <scope>FUNCTION</scope>
</reference>
<reference key="11">
    <citation type="journal article" date="2006" name="Nat. Cell Biol.">
        <title>Molecular architecture of a kinetochore-microtubule attachment site.</title>
        <authorList>
            <person name="Joglekar A.P."/>
            <person name="Bouck D.C."/>
            <person name="Molk J.N."/>
            <person name="Bloom K.S."/>
            <person name="Salmon E.D."/>
        </authorList>
    </citation>
    <scope>IDENTIFICATION IN THE DASH COMPLEX</scope>
</reference>
<reference key="12">
    <citation type="journal article" date="2006" name="Proc. Natl. Acad. Sci. U.S.A.">
        <title>The Dam1 kinetochore complex harnesses microtubule dynamics to produce force and movement.</title>
        <authorList>
            <person name="Asbury C.L."/>
            <person name="Gestaut D.R."/>
            <person name="Powers A.F."/>
            <person name="Franck A.D."/>
            <person name="Davis T.N."/>
        </authorList>
    </citation>
    <scope>FUNCTION</scope>
</reference>
<reference key="13">
    <citation type="journal article" date="2007" name="Genes Dev.">
        <title>Kinetochore microtubule interaction during S phase in Saccharomyces cerevisiae.</title>
        <authorList>
            <person name="Kitamura E."/>
            <person name="Tanaka K."/>
            <person name="Kitamura Y."/>
            <person name="Tanaka T.U."/>
        </authorList>
    </citation>
    <scope>FUNCTION</scope>
</reference>
<reference key="14">
    <citation type="journal article" date="2007" name="J. Cell Biol.">
        <title>Molecular mechanisms of microtubule-dependent kinetochore transport toward spindle poles.</title>
        <authorList>
            <person name="Tanaka K."/>
            <person name="Kitamura E."/>
            <person name="Kitamura Y."/>
            <person name="Tanaka T.U."/>
        </authorList>
    </citation>
    <scope>FUNCTION</scope>
</reference>
<reference key="15">
    <citation type="journal article" date="2007" name="J. Proteome Res.">
        <title>Large-scale phosphorylation analysis of alpha-factor-arrested Saccharomyces cerevisiae.</title>
        <authorList>
            <person name="Li X."/>
            <person name="Gerber S.A."/>
            <person name="Rudner A.D."/>
            <person name="Beausoleil S.A."/>
            <person name="Haas W."/>
            <person name="Villen J."/>
            <person name="Elias J.E."/>
            <person name="Gygi S.P."/>
        </authorList>
    </citation>
    <scope>PHOSPHORYLATION [LARGE SCALE ANALYSIS] AT THR-199</scope>
    <scope>IDENTIFICATION BY MASS SPECTROMETRY [LARGE SCALE ANALYSIS]</scope>
    <source>
        <strain>ADR376</strain>
    </source>
</reference>
<reference key="16">
    <citation type="journal article" date="2014" name="Curr. Biol.">
        <title>Assembling the protein architecture of the budding yeast kinetochore-microtubule attachment using FRET.</title>
        <authorList>
            <person name="Aravamudhan P."/>
            <person name="Felzer-Kim I."/>
            <person name="Gurunathan K."/>
            <person name="Joglekar A.P."/>
        </authorList>
    </citation>
    <scope>IDENTIFICATION IN THE DASH COMPLEX</scope>
</reference>
<reference key="17">
    <citation type="journal article" date="2014" name="Nat. Commun.">
        <title>Kinetochores require oligomerization of Dam1 complex to maintain microtubule attachments against tension and promote biorientation.</title>
        <authorList>
            <person name="Umbreit N.T."/>
            <person name="Miller M.P."/>
            <person name="Tien J.F."/>
            <person name="Ortola J.C."/>
            <person name="Gui L."/>
            <person name="Lee K.K."/>
            <person name="Biggins S."/>
            <person name="Asbury C.L."/>
            <person name="Davis T.N."/>
        </authorList>
    </citation>
    <scope>FUNCTION</scope>
    <scope>IDENTIFICATION IN THE DASH COMPLEX</scope>
</reference>
<reference key="18">
    <citation type="journal article" date="2023" name="Cell Rep.">
        <title>Single-copy locus proteomics of early- and late-firing DNA replication origins identifies a role of Ask1/DASH complex in replication timing control.</title>
        <authorList>
            <person name="Weibeta M."/>
            <person name="Chanou A."/>
            <person name="Schauer T."/>
            <person name="Tvardovskiy A."/>
            <person name="Meiser S."/>
            <person name="Koenig A.C."/>
            <person name="Schmidt T."/>
            <person name="Kruse E."/>
            <person name="Ummethum H."/>
            <person name="Trauner M."/>
            <person name="Werner M."/>
            <person name="Lalonde M."/>
            <person name="Hauck S.M."/>
            <person name="Scialdone A."/>
            <person name="Hamperl S."/>
        </authorList>
    </citation>
    <scope>FUNCTION</scope>
    <scope>SUBCELLULAR LOCATION</scope>
</reference>
<reference key="19">
    <citation type="journal article" date="2005" name="Nat. Struct. Mol. Biol.">
        <title>The yeast DASH complex forms closed rings on microtubules.</title>
        <authorList>
            <person name="Miranda J.L."/>
            <person name="Wulf P.D."/>
            <person name="Sorger P.K."/>
            <person name="Harrison S.C."/>
        </authorList>
    </citation>
    <scope>ELECTRON MICROSCOPY OF DASH COMPLEX ALONE AND BOUND TO MICROTUBULES</scope>
    <scope>FUNCTION</scope>
    <scope>IDENTIFICATION IN THE DASH COMPLEX</scope>
</reference>
<reference key="20">
    <citation type="journal article" date="2007" name="Nat. Struct. Mol. Biol.">
        <title>Architecture of the Dam1 kinetochore ring complex and implications for microtubule-driven assembly and force-coupling mechanisms.</title>
        <authorList>
            <person name="Wang H.W."/>
            <person name="Ramey V.H."/>
            <person name="Westermann S."/>
            <person name="Leschziner A.E."/>
            <person name="Welburn J.P."/>
            <person name="Nakajima Y."/>
            <person name="Drubin D.G."/>
            <person name="Barnes G."/>
            <person name="Nogales E."/>
        </authorList>
    </citation>
    <scope>ELECTRON MICROSCOPY OF DASH COMPLEX</scope>
    <scope>FUNCTION</scope>
    <scope>IDENTIFICATION IN THE DASH COMPLEX</scope>
    <scope>SUBUNIT</scope>
</reference>